<keyword id="KW-0067">ATP-binding</keyword>
<keyword id="KW-0418">Kinase</keyword>
<keyword id="KW-0441">Lipid A biosynthesis</keyword>
<keyword id="KW-0444">Lipid biosynthesis</keyword>
<keyword id="KW-0443">Lipid metabolism</keyword>
<keyword id="KW-0547">Nucleotide-binding</keyword>
<keyword id="KW-0808">Transferase</keyword>
<accession>Q02PE4</accession>
<organism>
    <name type="scientific">Pseudomonas aeruginosa (strain UCBPP-PA14)</name>
    <dbReference type="NCBI Taxonomy" id="208963"/>
    <lineage>
        <taxon>Bacteria</taxon>
        <taxon>Pseudomonadati</taxon>
        <taxon>Pseudomonadota</taxon>
        <taxon>Gammaproteobacteria</taxon>
        <taxon>Pseudomonadales</taxon>
        <taxon>Pseudomonadaceae</taxon>
        <taxon>Pseudomonas</taxon>
    </lineage>
</organism>
<protein>
    <recommendedName>
        <fullName evidence="1">Tetraacyldisaccharide 4'-kinase</fullName>
        <ecNumber evidence="1">2.7.1.130</ecNumber>
    </recommendedName>
    <alternativeName>
        <fullName evidence="1">Lipid A 4'-kinase</fullName>
    </alternativeName>
</protein>
<reference key="1">
    <citation type="journal article" date="2006" name="Genome Biol.">
        <title>Genomic analysis reveals that Pseudomonas aeruginosa virulence is combinatorial.</title>
        <authorList>
            <person name="Lee D.G."/>
            <person name="Urbach J.M."/>
            <person name="Wu G."/>
            <person name="Liberati N.T."/>
            <person name="Feinbaum R.L."/>
            <person name="Miyata S."/>
            <person name="Diggins L.T."/>
            <person name="He J."/>
            <person name="Saucier M."/>
            <person name="Deziel E."/>
            <person name="Friedman L."/>
            <person name="Li L."/>
            <person name="Grills G."/>
            <person name="Montgomery K."/>
            <person name="Kucherlapati R."/>
            <person name="Rahme L.G."/>
            <person name="Ausubel F.M."/>
        </authorList>
    </citation>
    <scope>NUCLEOTIDE SEQUENCE [LARGE SCALE GENOMIC DNA]</scope>
    <source>
        <strain>UCBPP-PA14</strain>
    </source>
</reference>
<dbReference type="EC" id="2.7.1.130" evidence="1"/>
<dbReference type="EMBL" id="CP000438">
    <property type="protein sequence ID" value="ABJ12219.1"/>
    <property type="molecule type" value="Genomic_DNA"/>
</dbReference>
<dbReference type="RefSeq" id="WP_003091159.1">
    <property type="nucleotide sequence ID" value="NZ_CP034244.1"/>
</dbReference>
<dbReference type="SMR" id="Q02PE4"/>
<dbReference type="KEGG" id="pau:PA14_25510"/>
<dbReference type="PseudoCAP" id="PA14_25510"/>
<dbReference type="HOGENOM" id="CLU_038816_2_0_6"/>
<dbReference type="BioCyc" id="PAER208963:G1G74-2127-MONOMER"/>
<dbReference type="UniPathway" id="UPA00359">
    <property type="reaction ID" value="UER00482"/>
</dbReference>
<dbReference type="Proteomes" id="UP000000653">
    <property type="component" value="Chromosome"/>
</dbReference>
<dbReference type="GO" id="GO:0005886">
    <property type="term" value="C:plasma membrane"/>
    <property type="evidence" value="ECO:0007669"/>
    <property type="project" value="TreeGrafter"/>
</dbReference>
<dbReference type="GO" id="GO:0005524">
    <property type="term" value="F:ATP binding"/>
    <property type="evidence" value="ECO:0007669"/>
    <property type="project" value="UniProtKB-UniRule"/>
</dbReference>
<dbReference type="GO" id="GO:0009029">
    <property type="term" value="F:tetraacyldisaccharide 4'-kinase activity"/>
    <property type="evidence" value="ECO:0007669"/>
    <property type="project" value="UniProtKB-UniRule"/>
</dbReference>
<dbReference type="GO" id="GO:0009245">
    <property type="term" value="P:lipid A biosynthetic process"/>
    <property type="evidence" value="ECO:0007669"/>
    <property type="project" value="UniProtKB-UniRule"/>
</dbReference>
<dbReference type="GO" id="GO:0009244">
    <property type="term" value="P:lipopolysaccharide core region biosynthetic process"/>
    <property type="evidence" value="ECO:0007669"/>
    <property type="project" value="TreeGrafter"/>
</dbReference>
<dbReference type="HAMAP" id="MF_00409">
    <property type="entry name" value="LpxK"/>
    <property type="match status" value="1"/>
</dbReference>
<dbReference type="InterPro" id="IPR003758">
    <property type="entry name" value="LpxK"/>
</dbReference>
<dbReference type="InterPro" id="IPR027417">
    <property type="entry name" value="P-loop_NTPase"/>
</dbReference>
<dbReference type="NCBIfam" id="TIGR00682">
    <property type="entry name" value="lpxK"/>
    <property type="match status" value="1"/>
</dbReference>
<dbReference type="PANTHER" id="PTHR42724">
    <property type="entry name" value="TETRAACYLDISACCHARIDE 4'-KINASE"/>
    <property type="match status" value="1"/>
</dbReference>
<dbReference type="PANTHER" id="PTHR42724:SF1">
    <property type="entry name" value="TETRAACYLDISACCHARIDE 4'-KINASE, MITOCHONDRIAL-RELATED"/>
    <property type="match status" value="1"/>
</dbReference>
<dbReference type="Pfam" id="PF02606">
    <property type="entry name" value="LpxK"/>
    <property type="match status" value="1"/>
</dbReference>
<dbReference type="SUPFAM" id="SSF52540">
    <property type="entry name" value="P-loop containing nucleoside triphosphate hydrolases"/>
    <property type="match status" value="1"/>
</dbReference>
<name>LPXK_PSEAB</name>
<sequence length="332" mass="36746">MSFSERLLAAWYQGHPALALLRPLEALYRRVANGRRADFLSGRKPAYRAPLPVLVVGNITVGGTGKTPMILWMIEHCRARGLRVGVISRGYGARPPTTPWRVRAEQDAAEAGDEPLMIVRRSGVPLMIDPDRPRALQALLAEEQLDLVLCDDGLQHYRLARDLELVLIDAARGLGNGRCLPAGPLREPAERLESVDALLYNGADEDPDGGYAFRLQPTALINLQSGERRPLEHFPAGQEVHALAGIGNPQRFFRTLEALHWRAIPHAFPDHATYTAAELAFSPPLPLLMTEKDAVKCRAFAAADWWYLAVDAVPSPAFVAWFDARLEHLLAR</sequence>
<comment type="function">
    <text evidence="1">Transfers the gamma-phosphate of ATP to the 4'-position of a tetraacyldisaccharide 1-phosphate intermediate (termed DS-1-P) to form tetraacyldisaccharide 1,4'-bis-phosphate (lipid IVA).</text>
</comment>
<comment type="catalytic activity">
    <reaction evidence="1">
        <text>a lipid A disaccharide + ATP = a lipid IVA + ADP + H(+)</text>
        <dbReference type="Rhea" id="RHEA:67840"/>
        <dbReference type="ChEBI" id="CHEBI:15378"/>
        <dbReference type="ChEBI" id="CHEBI:30616"/>
        <dbReference type="ChEBI" id="CHEBI:176343"/>
        <dbReference type="ChEBI" id="CHEBI:176425"/>
        <dbReference type="ChEBI" id="CHEBI:456216"/>
        <dbReference type="EC" id="2.7.1.130"/>
    </reaction>
</comment>
<comment type="pathway">
    <text evidence="1">Glycolipid biosynthesis; lipid IV(A) biosynthesis; lipid IV(A) from (3R)-3-hydroxytetradecanoyl-[acyl-carrier-protein] and UDP-N-acetyl-alpha-D-glucosamine: step 6/6.</text>
</comment>
<comment type="similarity">
    <text evidence="1">Belongs to the LpxK family.</text>
</comment>
<gene>
    <name evidence="1" type="primary">lpxK</name>
    <name type="ordered locus">PA14_25510</name>
</gene>
<evidence type="ECO:0000255" key="1">
    <source>
        <dbReference type="HAMAP-Rule" id="MF_00409"/>
    </source>
</evidence>
<proteinExistence type="inferred from homology"/>
<feature type="chain" id="PRO_0000291225" description="Tetraacyldisaccharide 4'-kinase">
    <location>
        <begin position="1"/>
        <end position="332"/>
    </location>
</feature>
<feature type="binding site" evidence="1">
    <location>
        <begin position="60"/>
        <end position="67"/>
    </location>
    <ligand>
        <name>ATP</name>
        <dbReference type="ChEBI" id="CHEBI:30616"/>
    </ligand>
</feature>